<keyword id="KW-0021">Allosteric enzyme</keyword>
<keyword id="KW-0067">ATP-binding</keyword>
<keyword id="KW-0963">Cytoplasm</keyword>
<keyword id="KW-0324">Glycolysis</keyword>
<keyword id="KW-0418">Kinase</keyword>
<keyword id="KW-0460">Magnesium</keyword>
<keyword id="KW-0479">Metal-binding</keyword>
<keyword id="KW-0547">Nucleotide-binding</keyword>
<keyword id="KW-0808">Transferase</keyword>
<accession>B0UW05</accession>
<comment type="function">
    <text evidence="1">Catalyzes the phosphorylation of D-fructose 6-phosphate to fructose 1,6-bisphosphate by ATP, the first committing step of glycolysis.</text>
</comment>
<comment type="catalytic activity">
    <reaction evidence="1">
        <text>beta-D-fructose 6-phosphate + ATP = beta-D-fructose 1,6-bisphosphate + ADP + H(+)</text>
        <dbReference type="Rhea" id="RHEA:16109"/>
        <dbReference type="ChEBI" id="CHEBI:15378"/>
        <dbReference type="ChEBI" id="CHEBI:30616"/>
        <dbReference type="ChEBI" id="CHEBI:32966"/>
        <dbReference type="ChEBI" id="CHEBI:57634"/>
        <dbReference type="ChEBI" id="CHEBI:456216"/>
        <dbReference type="EC" id="2.7.1.11"/>
    </reaction>
</comment>
<comment type="cofactor">
    <cofactor evidence="1">
        <name>Mg(2+)</name>
        <dbReference type="ChEBI" id="CHEBI:18420"/>
    </cofactor>
</comment>
<comment type="activity regulation">
    <text evidence="1">Allosterically activated by ADP and other diphosphonucleosides, and allosterically inhibited by phosphoenolpyruvate.</text>
</comment>
<comment type="pathway">
    <text evidence="1">Carbohydrate degradation; glycolysis; D-glyceraldehyde 3-phosphate and glycerone phosphate from D-glucose: step 3/4.</text>
</comment>
<comment type="subunit">
    <text evidence="1">Homotetramer.</text>
</comment>
<comment type="subcellular location">
    <subcellularLocation>
        <location evidence="1">Cytoplasm</location>
    </subcellularLocation>
</comment>
<comment type="similarity">
    <text evidence="1">Belongs to the phosphofructokinase type A (PFKA) family. ATP-dependent PFK group I subfamily. Prokaryotic clade 'B1' sub-subfamily.</text>
</comment>
<dbReference type="EC" id="2.7.1.11" evidence="1"/>
<dbReference type="EMBL" id="CP000947">
    <property type="protein sequence ID" value="ACA31569.1"/>
    <property type="molecule type" value="Genomic_DNA"/>
</dbReference>
<dbReference type="RefSeq" id="WP_011608642.1">
    <property type="nucleotide sequence ID" value="NC_010519.1"/>
</dbReference>
<dbReference type="SMR" id="B0UW05"/>
<dbReference type="STRING" id="228400.HSM_1786"/>
<dbReference type="GeneID" id="31488093"/>
<dbReference type="KEGG" id="hsm:HSM_1786"/>
<dbReference type="HOGENOM" id="CLU_020655_0_1_6"/>
<dbReference type="UniPathway" id="UPA00109">
    <property type="reaction ID" value="UER00182"/>
</dbReference>
<dbReference type="GO" id="GO:0005945">
    <property type="term" value="C:6-phosphofructokinase complex"/>
    <property type="evidence" value="ECO:0007669"/>
    <property type="project" value="TreeGrafter"/>
</dbReference>
<dbReference type="GO" id="GO:0003872">
    <property type="term" value="F:6-phosphofructokinase activity"/>
    <property type="evidence" value="ECO:0007669"/>
    <property type="project" value="UniProtKB-UniRule"/>
</dbReference>
<dbReference type="GO" id="GO:0016208">
    <property type="term" value="F:AMP binding"/>
    <property type="evidence" value="ECO:0007669"/>
    <property type="project" value="TreeGrafter"/>
</dbReference>
<dbReference type="GO" id="GO:0005524">
    <property type="term" value="F:ATP binding"/>
    <property type="evidence" value="ECO:0007669"/>
    <property type="project" value="UniProtKB-KW"/>
</dbReference>
<dbReference type="GO" id="GO:0070095">
    <property type="term" value="F:fructose-6-phosphate binding"/>
    <property type="evidence" value="ECO:0007669"/>
    <property type="project" value="TreeGrafter"/>
</dbReference>
<dbReference type="GO" id="GO:0042802">
    <property type="term" value="F:identical protein binding"/>
    <property type="evidence" value="ECO:0007669"/>
    <property type="project" value="TreeGrafter"/>
</dbReference>
<dbReference type="GO" id="GO:0046872">
    <property type="term" value="F:metal ion binding"/>
    <property type="evidence" value="ECO:0007669"/>
    <property type="project" value="UniProtKB-KW"/>
</dbReference>
<dbReference type="GO" id="GO:0048029">
    <property type="term" value="F:monosaccharide binding"/>
    <property type="evidence" value="ECO:0007669"/>
    <property type="project" value="TreeGrafter"/>
</dbReference>
<dbReference type="GO" id="GO:0061621">
    <property type="term" value="P:canonical glycolysis"/>
    <property type="evidence" value="ECO:0007669"/>
    <property type="project" value="TreeGrafter"/>
</dbReference>
<dbReference type="GO" id="GO:0030388">
    <property type="term" value="P:fructose 1,6-bisphosphate metabolic process"/>
    <property type="evidence" value="ECO:0007669"/>
    <property type="project" value="TreeGrafter"/>
</dbReference>
<dbReference type="GO" id="GO:0006002">
    <property type="term" value="P:fructose 6-phosphate metabolic process"/>
    <property type="evidence" value="ECO:0007669"/>
    <property type="project" value="InterPro"/>
</dbReference>
<dbReference type="CDD" id="cd00763">
    <property type="entry name" value="Bacterial_PFK"/>
    <property type="match status" value="1"/>
</dbReference>
<dbReference type="FunFam" id="3.40.50.450:FF:000001">
    <property type="entry name" value="ATP-dependent 6-phosphofructokinase"/>
    <property type="match status" value="1"/>
</dbReference>
<dbReference type="FunFam" id="3.40.50.460:FF:000002">
    <property type="entry name" value="ATP-dependent 6-phosphofructokinase"/>
    <property type="match status" value="1"/>
</dbReference>
<dbReference type="Gene3D" id="3.40.50.450">
    <property type="match status" value="1"/>
</dbReference>
<dbReference type="Gene3D" id="3.40.50.460">
    <property type="entry name" value="Phosphofructokinase domain"/>
    <property type="match status" value="1"/>
</dbReference>
<dbReference type="HAMAP" id="MF_00339">
    <property type="entry name" value="Phosphofructokinase_I_B1"/>
    <property type="match status" value="1"/>
</dbReference>
<dbReference type="InterPro" id="IPR022953">
    <property type="entry name" value="ATP_PFK"/>
</dbReference>
<dbReference type="InterPro" id="IPR012003">
    <property type="entry name" value="ATP_PFK_prok-type"/>
</dbReference>
<dbReference type="InterPro" id="IPR012828">
    <property type="entry name" value="PFKA_ATP_prok"/>
</dbReference>
<dbReference type="InterPro" id="IPR015912">
    <property type="entry name" value="Phosphofructokinase_CS"/>
</dbReference>
<dbReference type="InterPro" id="IPR000023">
    <property type="entry name" value="Phosphofructokinase_dom"/>
</dbReference>
<dbReference type="InterPro" id="IPR035966">
    <property type="entry name" value="PKF_sf"/>
</dbReference>
<dbReference type="NCBIfam" id="TIGR02482">
    <property type="entry name" value="PFKA_ATP"/>
    <property type="match status" value="1"/>
</dbReference>
<dbReference type="NCBIfam" id="NF002872">
    <property type="entry name" value="PRK03202.1"/>
    <property type="match status" value="1"/>
</dbReference>
<dbReference type="PANTHER" id="PTHR13697:SF4">
    <property type="entry name" value="ATP-DEPENDENT 6-PHOSPHOFRUCTOKINASE"/>
    <property type="match status" value="1"/>
</dbReference>
<dbReference type="PANTHER" id="PTHR13697">
    <property type="entry name" value="PHOSPHOFRUCTOKINASE"/>
    <property type="match status" value="1"/>
</dbReference>
<dbReference type="Pfam" id="PF00365">
    <property type="entry name" value="PFK"/>
    <property type="match status" value="1"/>
</dbReference>
<dbReference type="PIRSF" id="PIRSF000532">
    <property type="entry name" value="ATP_PFK_prok"/>
    <property type="match status" value="1"/>
</dbReference>
<dbReference type="PRINTS" id="PR00476">
    <property type="entry name" value="PHFRCTKINASE"/>
</dbReference>
<dbReference type="SUPFAM" id="SSF53784">
    <property type="entry name" value="Phosphofructokinase"/>
    <property type="match status" value="1"/>
</dbReference>
<dbReference type="PROSITE" id="PS00433">
    <property type="entry name" value="PHOSPHOFRUCTOKINASE"/>
    <property type="match status" value="1"/>
</dbReference>
<organism>
    <name type="scientific">Histophilus somni (strain 2336)</name>
    <name type="common">Haemophilus somnus</name>
    <dbReference type="NCBI Taxonomy" id="228400"/>
    <lineage>
        <taxon>Bacteria</taxon>
        <taxon>Pseudomonadati</taxon>
        <taxon>Pseudomonadota</taxon>
        <taxon>Gammaproteobacteria</taxon>
        <taxon>Pasteurellales</taxon>
        <taxon>Pasteurellaceae</taxon>
        <taxon>Histophilus</taxon>
    </lineage>
</organism>
<sequence length="321" mass="35266">MIKKIAVLTSGGDAPGMNAAIRGVVRSALSEGLEVYGIYEGYYGLYHNKIQQLTRYSVSDIINRGGTFLGSARFPEFKDPAVREKCVEILRSHGIDALVVIGGDGSYMGAKLLTEEHDFPCVGIPGTIDNDVAGTDYTIGYQTALETAVEAIDRLRDTSSSHKRISIVEIMGRHCSDLTISAAIAGGCEYIVASEIEFNREELIKQIERAIIKGKRHAIIAITELLCDVNELAREIEARVKHETRATILGHIQRGGTPCAFDRILGSRMGVYAVDLLLQGKGGYCVGIQNEQLVHHDIIDAINNMRREFKADWLAMSKRLD</sequence>
<feature type="chain" id="PRO_1000079310" description="ATP-dependent 6-phosphofructokinase">
    <location>
        <begin position="1"/>
        <end position="321"/>
    </location>
</feature>
<feature type="active site" description="Proton acceptor" evidence="1">
    <location>
        <position position="129"/>
    </location>
</feature>
<feature type="binding site" evidence="1">
    <location>
        <position position="12"/>
    </location>
    <ligand>
        <name>ATP</name>
        <dbReference type="ChEBI" id="CHEBI:30616"/>
    </ligand>
</feature>
<feature type="binding site" evidence="1">
    <location>
        <begin position="22"/>
        <end position="26"/>
    </location>
    <ligand>
        <name>ADP</name>
        <dbReference type="ChEBI" id="CHEBI:456216"/>
        <note>allosteric activator; ligand shared between dimeric partners</note>
    </ligand>
</feature>
<feature type="binding site" evidence="1">
    <location>
        <begin position="55"/>
        <end position="60"/>
    </location>
    <ligand>
        <name>ADP</name>
        <dbReference type="ChEBI" id="CHEBI:456216"/>
        <note>allosteric activator; ligand shared between dimeric partners</note>
    </ligand>
</feature>
<feature type="binding site" evidence="1">
    <location>
        <begin position="73"/>
        <end position="74"/>
    </location>
    <ligand>
        <name>ATP</name>
        <dbReference type="ChEBI" id="CHEBI:30616"/>
    </ligand>
</feature>
<feature type="binding site" evidence="1">
    <location>
        <begin position="103"/>
        <end position="106"/>
    </location>
    <ligand>
        <name>ATP</name>
        <dbReference type="ChEBI" id="CHEBI:30616"/>
    </ligand>
</feature>
<feature type="binding site" evidence="1">
    <location>
        <position position="104"/>
    </location>
    <ligand>
        <name>Mg(2+)</name>
        <dbReference type="ChEBI" id="CHEBI:18420"/>
        <note>catalytic</note>
    </ligand>
</feature>
<feature type="binding site" description="in other chain" evidence="1">
    <location>
        <begin position="127"/>
        <end position="129"/>
    </location>
    <ligand>
        <name>substrate</name>
        <note>ligand shared between dimeric partners</note>
    </ligand>
</feature>
<feature type="binding site" description="in other chain" evidence="1">
    <location>
        <position position="156"/>
    </location>
    <ligand>
        <name>ADP</name>
        <dbReference type="ChEBI" id="CHEBI:456216"/>
        <note>allosteric activator; ligand shared between dimeric partners</note>
    </ligand>
</feature>
<feature type="binding site" evidence="1">
    <location>
        <position position="164"/>
    </location>
    <ligand>
        <name>substrate</name>
        <note>ligand shared between dimeric partners</note>
    </ligand>
</feature>
<feature type="binding site" description="in other chain" evidence="1">
    <location>
        <begin position="171"/>
        <end position="173"/>
    </location>
    <ligand>
        <name>substrate</name>
        <note>ligand shared between dimeric partners</note>
    </ligand>
</feature>
<feature type="binding site" description="in other chain" evidence="1">
    <location>
        <begin position="187"/>
        <end position="189"/>
    </location>
    <ligand>
        <name>ADP</name>
        <dbReference type="ChEBI" id="CHEBI:456216"/>
        <note>allosteric activator; ligand shared between dimeric partners</note>
    </ligand>
</feature>
<feature type="binding site" description="in other chain" evidence="1">
    <location>
        <position position="213"/>
    </location>
    <ligand>
        <name>ADP</name>
        <dbReference type="ChEBI" id="CHEBI:456216"/>
        <note>allosteric activator; ligand shared between dimeric partners</note>
    </ligand>
</feature>
<feature type="binding site" description="in other chain" evidence="1">
    <location>
        <begin position="215"/>
        <end position="217"/>
    </location>
    <ligand>
        <name>ADP</name>
        <dbReference type="ChEBI" id="CHEBI:456216"/>
        <note>allosteric activator; ligand shared between dimeric partners</note>
    </ligand>
</feature>
<feature type="binding site" description="in other chain" evidence="1">
    <location>
        <position position="224"/>
    </location>
    <ligand>
        <name>substrate</name>
        <note>ligand shared between dimeric partners</note>
    </ligand>
</feature>
<feature type="binding site" evidence="1">
    <location>
        <position position="245"/>
    </location>
    <ligand>
        <name>substrate</name>
        <note>ligand shared between dimeric partners</note>
    </ligand>
</feature>
<feature type="binding site" description="in other chain" evidence="1">
    <location>
        <begin position="251"/>
        <end position="254"/>
    </location>
    <ligand>
        <name>substrate</name>
        <note>ligand shared between dimeric partners</note>
    </ligand>
</feature>
<proteinExistence type="inferred from homology"/>
<evidence type="ECO:0000255" key="1">
    <source>
        <dbReference type="HAMAP-Rule" id="MF_00339"/>
    </source>
</evidence>
<gene>
    <name evidence="1" type="primary">pfkA</name>
    <name type="ordered locus">HSM_1786</name>
</gene>
<protein>
    <recommendedName>
        <fullName evidence="1">ATP-dependent 6-phosphofructokinase</fullName>
        <shortName evidence="1">ATP-PFK</shortName>
        <shortName evidence="1">Phosphofructokinase</shortName>
        <ecNumber evidence="1">2.7.1.11</ecNumber>
    </recommendedName>
    <alternativeName>
        <fullName evidence="1">Phosphohexokinase</fullName>
    </alternativeName>
</protein>
<reference key="1">
    <citation type="submission" date="2008-02" db="EMBL/GenBank/DDBJ databases">
        <title>Complete sequence of Haemophilus somnus 2336.</title>
        <authorList>
            <consortium name="US DOE Joint Genome Institute"/>
            <person name="Siddaramappa S."/>
            <person name="Duncan A.J."/>
            <person name="Challacombe J.F."/>
            <person name="Rainey D."/>
            <person name="Gillaspy A.F."/>
            <person name="Carson M."/>
            <person name="Gipson J."/>
            <person name="Gipson M."/>
            <person name="Bruce D."/>
            <person name="Detter J.C."/>
            <person name="Han C.S."/>
            <person name="Land M."/>
            <person name="Tapia R."/>
            <person name="Thompson L.S."/>
            <person name="Orvis J."/>
            <person name="Zaitshik J."/>
            <person name="Barnes G."/>
            <person name="Brettin T.S."/>
            <person name="Dyer D.W."/>
            <person name="Inzana T.J."/>
        </authorList>
    </citation>
    <scope>NUCLEOTIDE SEQUENCE [LARGE SCALE GENOMIC DNA]</scope>
    <source>
        <strain>2336</strain>
    </source>
</reference>
<name>PFKA_HISS2</name>